<accession>B2SGE3</accession>
<reference key="1">
    <citation type="journal article" date="2009" name="PLoS Pathog.">
        <title>Molecular evolutionary consequences of niche restriction in Francisella tularensis, a facultative intracellular pathogen.</title>
        <authorList>
            <person name="Larsson P."/>
            <person name="Elfsmark D."/>
            <person name="Svensson K."/>
            <person name="Wikstroem P."/>
            <person name="Forsman M."/>
            <person name="Brettin T."/>
            <person name="Keim P."/>
            <person name="Johansson A."/>
        </authorList>
    </citation>
    <scope>NUCLEOTIDE SEQUENCE [LARGE SCALE GENOMIC DNA]</scope>
    <source>
        <strain>FSC147</strain>
    </source>
</reference>
<comment type="function">
    <text evidence="1">Catalyzes the conversion of dethiobiotin (DTB) to biotin by the insertion of a sulfur atom into dethiobiotin via a radical-based mechanism.</text>
</comment>
<comment type="catalytic activity">
    <reaction evidence="1">
        <text>(4R,5S)-dethiobiotin + (sulfur carrier)-SH + 2 reduced [2Fe-2S]-[ferredoxin] + 2 S-adenosyl-L-methionine = (sulfur carrier)-H + biotin + 2 5'-deoxyadenosine + 2 L-methionine + 2 oxidized [2Fe-2S]-[ferredoxin]</text>
        <dbReference type="Rhea" id="RHEA:22060"/>
        <dbReference type="Rhea" id="RHEA-COMP:10000"/>
        <dbReference type="Rhea" id="RHEA-COMP:10001"/>
        <dbReference type="Rhea" id="RHEA-COMP:14737"/>
        <dbReference type="Rhea" id="RHEA-COMP:14739"/>
        <dbReference type="ChEBI" id="CHEBI:17319"/>
        <dbReference type="ChEBI" id="CHEBI:29917"/>
        <dbReference type="ChEBI" id="CHEBI:33737"/>
        <dbReference type="ChEBI" id="CHEBI:33738"/>
        <dbReference type="ChEBI" id="CHEBI:57586"/>
        <dbReference type="ChEBI" id="CHEBI:57844"/>
        <dbReference type="ChEBI" id="CHEBI:59789"/>
        <dbReference type="ChEBI" id="CHEBI:64428"/>
        <dbReference type="ChEBI" id="CHEBI:149473"/>
        <dbReference type="EC" id="2.8.1.6"/>
    </reaction>
</comment>
<comment type="cofactor">
    <cofactor evidence="1">
        <name>[4Fe-4S] cluster</name>
        <dbReference type="ChEBI" id="CHEBI:49883"/>
    </cofactor>
    <text evidence="1">Binds 1 [4Fe-4S] cluster. The cluster is coordinated with 3 cysteines and an exchangeable S-adenosyl-L-methionine.</text>
</comment>
<comment type="cofactor">
    <cofactor evidence="1">
        <name>[2Fe-2S] cluster</name>
        <dbReference type="ChEBI" id="CHEBI:190135"/>
    </cofactor>
    <text evidence="1">Binds 1 [2Fe-2S] cluster. The cluster is coordinated with 3 cysteines and 1 arginine.</text>
</comment>
<comment type="pathway">
    <text evidence="1">Cofactor biosynthesis; biotin biosynthesis; biotin from 7,8-diaminononanoate: step 2/2.</text>
</comment>
<comment type="subunit">
    <text evidence="1">Homodimer.</text>
</comment>
<comment type="similarity">
    <text evidence="1">Belongs to the radical SAM superfamily. Biotin synthase family.</text>
</comment>
<sequence length="313" mass="34853">MTLQQIKEIYSRPLTELILQALEIHNKNFGNDIELCSLKSIKTGTCPEDCKYCPQSGHYNTSIEKHKLLDKDSILAEAKNAKDAGSKRFCMGAAWKHIPKKDFDQVAEIITEVKNLGLETCVTLGSINADEATKLKQAGLDYYNHNLDTSREFYPEIITTRKFEERIETIRNVANADINVCCGGILGMGESLDDRFNLLLELLQLPAAPKSIPINTLIPVKGTPLGDKYTNAQIDSFELVKFIATTRILFPQARLRLSAGRENMSLETQTLCFLAGINSIFYGNKLLTENNATVNSDNFLLAKLGLKSNAELC</sequence>
<gene>
    <name evidence="1" type="primary">bioB</name>
    <name type="ordered locus">FTM_0855</name>
</gene>
<keyword id="KW-0001">2Fe-2S</keyword>
<keyword id="KW-0004">4Fe-4S</keyword>
<keyword id="KW-0093">Biotin biosynthesis</keyword>
<keyword id="KW-0408">Iron</keyword>
<keyword id="KW-0411">Iron-sulfur</keyword>
<keyword id="KW-0479">Metal-binding</keyword>
<keyword id="KW-0949">S-adenosyl-L-methionine</keyword>
<keyword id="KW-0808">Transferase</keyword>
<name>BIOB_FRATM</name>
<protein>
    <recommendedName>
        <fullName evidence="1">Biotin synthase</fullName>
        <ecNumber evidence="1">2.8.1.6</ecNumber>
    </recommendedName>
</protein>
<evidence type="ECO:0000255" key="1">
    <source>
        <dbReference type="HAMAP-Rule" id="MF_01694"/>
    </source>
</evidence>
<evidence type="ECO:0000255" key="2">
    <source>
        <dbReference type="PROSITE-ProRule" id="PRU01266"/>
    </source>
</evidence>
<dbReference type="EC" id="2.8.1.6" evidence="1"/>
<dbReference type="EMBL" id="CP000915">
    <property type="protein sequence ID" value="ACD30802.1"/>
    <property type="molecule type" value="Genomic_DNA"/>
</dbReference>
<dbReference type="SMR" id="B2SGE3"/>
<dbReference type="KEGG" id="ftm:FTM_0855"/>
<dbReference type="HOGENOM" id="CLU_033172_1_2_6"/>
<dbReference type="UniPathway" id="UPA00078">
    <property type="reaction ID" value="UER00162"/>
</dbReference>
<dbReference type="GO" id="GO:0051537">
    <property type="term" value="F:2 iron, 2 sulfur cluster binding"/>
    <property type="evidence" value="ECO:0007669"/>
    <property type="project" value="UniProtKB-KW"/>
</dbReference>
<dbReference type="GO" id="GO:0051539">
    <property type="term" value="F:4 iron, 4 sulfur cluster binding"/>
    <property type="evidence" value="ECO:0007669"/>
    <property type="project" value="UniProtKB-KW"/>
</dbReference>
<dbReference type="GO" id="GO:0004076">
    <property type="term" value="F:biotin synthase activity"/>
    <property type="evidence" value="ECO:0007669"/>
    <property type="project" value="UniProtKB-UniRule"/>
</dbReference>
<dbReference type="GO" id="GO:0005506">
    <property type="term" value="F:iron ion binding"/>
    <property type="evidence" value="ECO:0007669"/>
    <property type="project" value="UniProtKB-UniRule"/>
</dbReference>
<dbReference type="GO" id="GO:0009102">
    <property type="term" value="P:biotin biosynthetic process"/>
    <property type="evidence" value="ECO:0007669"/>
    <property type="project" value="UniProtKB-UniRule"/>
</dbReference>
<dbReference type="CDD" id="cd01335">
    <property type="entry name" value="Radical_SAM"/>
    <property type="match status" value="1"/>
</dbReference>
<dbReference type="Gene3D" id="3.20.20.70">
    <property type="entry name" value="Aldolase class I"/>
    <property type="match status" value="1"/>
</dbReference>
<dbReference type="HAMAP" id="MF_01694">
    <property type="entry name" value="BioB"/>
    <property type="match status" value="1"/>
</dbReference>
<dbReference type="InterPro" id="IPR013785">
    <property type="entry name" value="Aldolase_TIM"/>
</dbReference>
<dbReference type="InterPro" id="IPR010722">
    <property type="entry name" value="BATS_dom"/>
</dbReference>
<dbReference type="InterPro" id="IPR002684">
    <property type="entry name" value="Biotin_synth/BioAB"/>
</dbReference>
<dbReference type="InterPro" id="IPR024177">
    <property type="entry name" value="Biotin_synthase"/>
</dbReference>
<dbReference type="InterPro" id="IPR006638">
    <property type="entry name" value="Elp3/MiaA/NifB-like_rSAM"/>
</dbReference>
<dbReference type="InterPro" id="IPR007197">
    <property type="entry name" value="rSAM"/>
</dbReference>
<dbReference type="NCBIfam" id="TIGR00433">
    <property type="entry name" value="bioB"/>
    <property type="match status" value="1"/>
</dbReference>
<dbReference type="PANTHER" id="PTHR22976">
    <property type="entry name" value="BIOTIN SYNTHASE"/>
    <property type="match status" value="1"/>
</dbReference>
<dbReference type="PANTHER" id="PTHR22976:SF2">
    <property type="entry name" value="BIOTIN SYNTHASE, MITOCHONDRIAL"/>
    <property type="match status" value="1"/>
</dbReference>
<dbReference type="Pfam" id="PF06968">
    <property type="entry name" value="BATS"/>
    <property type="match status" value="1"/>
</dbReference>
<dbReference type="Pfam" id="PF04055">
    <property type="entry name" value="Radical_SAM"/>
    <property type="match status" value="1"/>
</dbReference>
<dbReference type="PIRSF" id="PIRSF001619">
    <property type="entry name" value="Biotin_synth"/>
    <property type="match status" value="1"/>
</dbReference>
<dbReference type="SFLD" id="SFLDF00272">
    <property type="entry name" value="biotin_synthase"/>
    <property type="match status" value="1"/>
</dbReference>
<dbReference type="SFLD" id="SFLDG01278">
    <property type="entry name" value="biotin_synthase_like"/>
    <property type="match status" value="1"/>
</dbReference>
<dbReference type="SMART" id="SM00876">
    <property type="entry name" value="BATS"/>
    <property type="match status" value="1"/>
</dbReference>
<dbReference type="SMART" id="SM00729">
    <property type="entry name" value="Elp3"/>
    <property type="match status" value="1"/>
</dbReference>
<dbReference type="SUPFAM" id="SSF102114">
    <property type="entry name" value="Radical SAM enzymes"/>
    <property type="match status" value="1"/>
</dbReference>
<dbReference type="PROSITE" id="PS51918">
    <property type="entry name" value="RADICAL_SAM"/>
    <property type="match status" value="1"/>
</dbReference>
<proteinExistence type="inferred from homology"/>
<organism>
    <name type="scientific">Francisella tularensis subsp. mediasiatica (strain FSC147)</name>
    <dbReference type="NCBI Taxonomy" id="441952"/>
    <lineage>
        <taxon>Bacteria</taxon>
        <taxon>Pseudomonadati</taxon>
        <taxon>Pseudomonadota</taxon>
        <taxon>Gammaproteobacteria</taxon>
        <taxon>Thiotrichales</taxon>
        <taxon>Francisellaceae</taxon>
        <taxon>Francisella</taxon>
    </lineage>
</organism>
<feature type="chain" id="PRO_0000381394" description="Biotin synthase">
    <location>
        <begin position="1"/>
        <end position="313"/>
    </location>
</feature>
<feature type="domain" description="Radical SAM core" evidence="2">
    <location>
        <begin position="28"/>
        <end position="258"/>
    </location>
</feature>
<feature type="binding site" evidence="1">
    <location>
        <position position="46"/>
    </location>
    <ligand>
        <name>[4Fe-4S] cluster</name>
        <dbReference type="ChEBI" id="CHEBI:49883"/>
        <note>4Fe-4S-S-AdoMet</note>
    </ligand>
</feature>
<feature type="binding site" evidence="1">
    <location>
        <position position="50"/>
    </location>
    <ligand>
        <name>[4Fe-4S] cluster</name>
        <dbReference type="ChEBI" id="CHEBI:49883"/>
        <note>4Fe-4S-S-AdoMet</note>
    </ligand>
</feature>
<feature type="binding site" evidence="1">
    <location>
        <position position="53"/>
    </location>
    <ligand>
        <name>[4Fe-4S] cluster</name>
        <dbReference type="ChEBI" id="CHEBI:49883"/>
        <note>4Fe-4S-S-AdoMet</note>
    </ligand>
</feature>
<feature type="binding site" evidence="1">
    <location>
        <position position="90"/>
    </location>
    <ligand>
        <name>[2Fe-2S] cluster</name>
        <dbReference type="ChEBI" id="CHEBI:190135"/>
    </ligand>
</feature>
<feature type="binding site" evidence="1">
    <location>
        <position position="121"/>
    </location>
    <ligand>
        <name>[2Fe-2S] cluster</name>
        <dbReference type="ChEBI" id="CHEBI:190135"/>
    </ligand>
</feature>
<feature type="binding site" evidence="1">
    <location>
        <position position="181"/>
    </location>
    <ligand>
        <name>[2Fe-2S] cluster</name>
        <dbReference type="ChEBI" id="CHEBI:190135"/>
    </ligand>
</feature>
<feature type="binding site" evidence="1">
    <location>
        <position position="256"/>
    </location>
    <ligand>
        <name>[2Fe-2S] cluster</name>
        <dbReference type="ChEBI" id="CHEBI:190135"/>
    </ligand>
</feature>